<name>MUKB_ECODH</name>
<keyword id="KW-0067">ATP-binding</keyword>
<keyword id="KW-0131">Cell cycle</keyword>
<keyword id="KW-0132">Cell division</keyword>
<keyword id="KW-0159">Chromosome partition</keyword>
<keyword id="KW-0175">Coiled coil</keyword>
<keyword id="KW-0963">Cytoplasm</keyword>
<keyword id="KW-0226">DNA condensation</keyword>
<keyword id="KW-0238">DNA-binding</keyword>
<keyword id="KW-0547">Nucleotide-binding</keyword>
<reference key="1">
    <citation type="journal article" date="2008" name="J. Bacteriol.">
        <title>The complete genome sequence of Escherichia coli DH10B: insights into the biology of a laboratory workhorse.</title>
        <authorList>
            <person name="Durfee T."/>
            <person name="Nelson R."/>
            <person name="Baldwin S."/>
            <person name="Plunkett G. III"/>
            <person name="Burland V."/>
            <person name="Mau B."/>
            <person name="Petrosino J.F."/>
            <person name="Qin X."/>
            <person name="Muzny D.M."/>
            <person name="Ayele M."/>
            <person name="Gibbs R.A."/>
            <person name="Csorgo B."/>
            <person name="Posfai G."/>
            <person name="Weinstock G.M."/>
            <person name="Blattner F.R."/>
        </authorList>
    </citation>
    <scope>NUCLEOTIDE SEQUENCE [LARGE SCALE GENOMIC DNA]</scope>
    <source>
        <strain>K12 / DH10B</strain>
    </source>
</reference>
<dbReference type="EMBL" id="CP000948">
    <property type="protein sequence ID" value="ACB02124.1"/>
    <property type="molecule type" value="Genomic_DNA"/>
</dbReference>
<dbReference type="RefSeq" id="WP_000572698.1">
    <property type="nucleotide sequence ID" value="NC_010473.1"/>
</dbReference>
<dbReference type="SMR" id="B1X8M8"/>
<dbReference type="KEGG" id="ecd:ECDH10B_0994"/>
<dbReference type="HOGENOM" id="CLU_004430_0_0_6"/>
<dbReference type="GO" id="GO:0005737">
    <property type="term" value="C:cytoplasm"/>
    <property type="evidence" value="ECO:0007669"/>
    <property type="project" value="UniProtKB-UniRule"/>
</dbReference>
<dbReference type="GO" id="GO:0009295">
    <property type="term" value="C:nucleoid"/>
    <property type="evidence" value="ECO:0007669"/>
    <property type="project" value="UniProtKB-SubCell"/>
</dbReference>
<dbReference type="GO" id="GO:0005524">
    <property type="term" value="F:ATP binding"/>
    <property type="evidence" value="ECO:0007669"/>
    <property type="project" value="UniProtKB-UniRule"/>
</dbReference>
<dbReference type="GO" id="GO:0003677">
    <property type="term" value="F:DNA binding"/>
    <property type="evidence" value="ECO:0007669"/>
    <property type="project" value="UniProtKB-UniRule"/>
</dbReference>
<dbReference type="GO" id="GO:0051301">
    <property type="term" value="P:cell division"/>
    <property type="evidence" value="ECO:0007669"/>
    <property type="project" value="UniProtKB-KW"/>
</dbReference>
<dbReference type="GO" id="GO:0030261">
    <property type="term" value="P:chromosome condensation"/>
    <property type="evidence" value="ECO:0007669"/>
    <property type="project" value="UniProtKB-KW"/>
</dbReference>
<dbReference type="GO" id="GO:0007059">
    <property type="term" value="P:chromosome segregation"/>
    <property type="evidence" value="ECO:0007669"/>
    <property type="project" value="UniProtKB-UniRule"/>
</dbReference>
<dbReference type="GO" id="GO:0006260">
    <property type="term" value="P:DNA replication"/>
    <property type="evidence" value="ECO:0007669"/>
    <property type="project" value="UniProtKB-UniRule"/>
</dbReference>
<dbReference type="FunFam" id="1.20.58.850:FF:000001">
    <property type="entry name" value="Chromosome partition protein MukB"/>
    <property type="match status" value="1"/>
</dbReference>
<dbReference type="FunFam" id="3.30.70.3500:FF:000001">
    <property type="entry name" value="Chromosome partition protein MukB"/>
    <property type="match status" value="1"/>
</dbReference>
<dbReference type="FunFam" id="3.40.1140.10:FF:000001">
    <property type="entry name" value="Chromosome partition protein MukB"/>
    <property type="match status" value="1"/>
</dbReference>
<dbReference type="FunFam" id="3.40.1140.10:FF:000002">
    <property type="entry name" value="Chromosome partition protein MukB"/>
    <property type="match status" value="1"/>
</dbReference>
<dbReference type="Gene3D" id="1.20.58.850">
    <property type="match status" value="1"/>
</dbReference>
<dbReference type="Gene3D" id="3.40.1140.10">
    <property type="match status" value="2"/>
</dbReference>
<dbReference type="Gene3D" id="1.20.5.420">
    <property type="entry name" value="Immunoglobulin FC, subunit C"/>
    <property type="match status" value="1"/>
</dbReference>
<dbReference type="Gene3D" id="3.30.70.3500">
    <property type="entry name" value="MukB, hinge domain"/>
    <property type="match status" value="1"/>
</dbReference>
<dbReference type="HAMAP" id="MF_01800">
    <property type="entry name" value="MukB"/>
    <property type="match status" value="1"/>
</dbReference>
<dbReference type="InterPro" id="IPR012090">
    <property type="entry name" value="MukB"/>
</dbReference>
<dbReference type="InterPro" id="IPR050308">
    <property type="entry name" value="MukB/SMC"/>
</dbReference>
<dbReference type="InterPro" id="IPR032520">
    <property type="entry name" value="MukB_hinge"/>
</dbReference>
<dbReference type="InterPro" id="IPR042501">
    <property type="entry name" value="MukB_hinge_sf"/>
</dbReference>
<dbReference type="InterPro" id="IPR007406">
    <property type="entry name" value="MukB_N_dom"/>
</dbReference>
<dbReference type="InterPro" id="IPR027417">
    <property type="entry name" value="P-loop_NTPase"/>
</dbReference>
<dbReference type="NCBIfam" id="NF003422">
    <property type="entry name" value="PRK04863.1"/>
    <property type="match status" value="1"/>
</dbReference>
<dbReference type="PANTHER" id="PTHR42963">
    <property type="entry name" value="CHROMOSOME PARTITION PROTEIN MUKB"/>
    <property type="match status" value="1"/>
</dbReference>
<dbReference type="PANTHER" id="PTHR42963:SF1">
    <property type="entry name" value="DUF4476 DOMAIN-CONTAINING PROTEIN"/>
    <property type="match status" value="1"/>
</dbReference>
<dbReference type="Pfam" id="PF04310">
    <property type="entry name" value="MukB"/>
    <property type="match status" value="1"/>
</dbReference>
<dbReference type="Pfam" id="PF16330">
    <property type="entry name" value="MukB_hinge"/>
    <property type="match status" value="1"/>
</dbReference>
<dbReference type="Pfam" id="PF13558">
    <property type="entry name" value="SbcC_Walker_B"/>
    <property type="match status" value="1"/>
</dbReference>
<dbReference type="PIRSF" id="PIRSF005246">
    <property type="entry name" value="MukB"/>
    <property type="match status" value="1"/>
</dbReference>
<dbReference type="SUPFAM" id="SSF52540">
    <property type="entry name" value="P-loop containing nucleoside triphosphate hydrolases"/>
    <property type="match status" value="2"/>
</dbReference>
<gene>
    <name evidence="1" type="primary">mukB</name>
    <name type="ordered locus">ECDH10B_0994</name>
</gene>
<comment type="function">
    <text evidence="1">Plays a central role in chromosome condensation, segregation and cell cycle progression. Functions as a homodimer, which is essential for chromosome partition. Involved in negative DNA supercoiling in vivo, and by this means organize and compact chromosomes. May achieve or facilitate chromosome segregation by condensation DNA from both sides of a centrally located replisome during cell division.</text>
</comment>
<comment type="subunit">
    <text evidence="1">Homodimerization via its hinge domain. Binds to DNA via its C-terminal region. Interacts, and probably forms a ternary complex, with MukE and MukF via its C-terminal region. The complex formation is stimulated by calcium or magnesium. Interacts with tubulin-related protein FtsZ.</text>
</comment>
<comment type="subcellular location">
    <subcellularLocation>
        <location evidence="1">Cytoplasm</location>
        <location evidence="1">Nucleoid</location>
    </subcellularLocation>
    <text evidence="1">Restricted to the nucleoid region.</text>
</comment>
<comment type="domain">
    <text evidence="1">The hinge domain, which separates the large intramolecular coiled coil regions, allows the homodimerization, forming a V-shaped homodimer.</text>
</comment>
<comment type="similarity">
    <text evidence="1">Belongs to the SMC family. MukB subfamily.</text>
</comment>
<feature type="chain" id="PRO_1000187473" description="Chromosome partition protein MukB">
    <location>
        <begin position="1"/>
        <end position="1486"/>
    </location>
</feature>
<feature type="region of interest" description="Flexible hinge" evidence="1">
    <location>
        <begin position="666"/>
        <end position="783"/>
    </location>
</feature>
<feature type="coiled-coil region" evidence="1">
    <location>
        <begin position="326"/>
        <end position="418"/>
    </location>
</feature>
<feature type="coiled-coil region" evidence="1">
    <location>
        <begin position="444"/>
        <end position="480"/>
    </location>
</feature>
<feature type="coiled-coil region" evidence="1">
    <location>
        <begin position="509"/>
        <end position="603"/>
    </location>
</feature>
<feature type="coiled-coil region" evidence="1">
    <location>
        <begin position="835"/>
        <end position="923"/>
    </location>
</feature>
<feature type="coiled-coil region" evidence="1">
    <location>
        <begin position="977"/>
        <end position="1115"/>
    </location>
</feature>
<feature type="coiled-coil region" evidence="1">
    <location>
        <begin position="1209"/>
        <end position="1266"/>
    </location>
</feature>
<feature type="binding site" evidence="1">
    <location>
        <begin position="34"/>
        <end position="41"/>
    </location>
    <ligand>
        <name>ATP</name>
        <dbReference type="ChEBI" id="CHEBI:30616"/>
    </ligand>
</feature>
<sequence length="1486" mass="170230">MIERGKFRSLTLINWNGFFARTFDLDELVTTLSGGNGAGKSTTMAAFVTALIPDLTLLHFRNTTEAGATSGSRDKGLHGKLKAGVCYSMLDTINSRHQRVVVGVRLQQVAGRDRKVDIKPFAIQGLPMSVQPTQLVTETLNERQARVLPLNELKDKLEAMEGVQFKQFNSITDYHSLMFDLGIIARRLRSASDRSKFYRLIEASLYGGISSAITRSLRDYLLPENSGVRKAFQDMEAALRENRMTLEAIRVTQSDRDLFKHLISEATNYVAADYMRHANERRVHLDKALEFRRELHTSRQQLAAEQYKHVDMARELAEHNGAEGDLEADYQAASDHLNLVQTALRQQEKIERYEADLDELQIRLEEQNEVVAEAIERQQENEARAEAAELEVDELKSQLADYQQALDVQQTRAIQYNQAIAALNRAKELCHLPDLTADCAAEWLETFQAKELEATEKMLSLEQKMSMAQTAHSQFEQAYQLVVAINGPLARNEAWDVARELLREGVDQRHLAEQVQPLRMRLSELEQRLREQQEAERLLADFCKRQGKNFDIDELEALHQELEARIASLSDSVSNAREERMALRQEQEQLQSRIQSLMQRAPVWLAAQNSLNQLSEQCGEEFTSSQDVTEYLQQLLEREREAIVERDEVGARKNAVDEEIERLSQPGGSEDQRLNALAERFGGVLLSEIYDDVSLEDAPYFSALYGPSRHAIVVPDLSQVTEHLEGLTDCPEDLYLIEGDPQSFDDSVFSVDELEKAVVVKIADRQWRYSRFPEVPLFGRAARESRIESLHAEREVLSERFATLSFDVQKTQRLHQAFSRFIGSHLAVAFESDPEAEIRQLNSRRVELERALSNHENDNQQQRIQFEQAKEGVTALNRILPRLNLLADDSLADRVDEIRERLDEAQEAARFVQQFGNQLAKLEPIVSVLQSDPEQFEQLKEDYAYSQQMQRDARQQAFALTEVVQRRAHFSYSDSAEMLSGNSDLNEKLRERLEQAEAERTRAREALRGHAAQLSQYNQVLASLKSSYDTKKELLNDLQRELQDIGVRADSGAEERARIRRDELHAQLSNNRSRRNQLEKALTFCEAEMDNLTRKLRKLERDYFEMREQVVTAKAGWCAVMRMVKDNGVERRLHRRELAYLSADDLRSMSDKALGALRLAVADNEHLRDVLRMSEDPKRPERKIQFFVAVYQHLRERIRQDIIRTDDPVEAIEQMEIELSRLTEELTSREQKLAISSRSVANIIRKTIQREQNRIRMLNQGLQNVSFGQVNSVRLNVNVRETHAMLLDVLSEQHEQHQDLFNSNRLTFSEALAKLYQRLNPQIDMGQRTPQTIGEELLDYRNYLEMEVEVNRGSDGWLRAESGALSTGEAIGTGMSILVMVVQSWEDESRRLRGKDISPCRLLFLDEAARLDARSIATLFELCERLQMQLIIAAPENISPEKGTTYKLVRKVFQNTEHVHVVGLRGFAPQLPETLPGTDEAPSQAS</sequence>
<protein>
    <recommendedName>
        <fullName evidence="1">Chromosome partition protein MukB</fullName>
    </recommendedName>
    <alternativeName>
        <fullName evidence="1">Structural maintenance of chromosome-related protein</fullName>
    </alternativeName>
</protein>
<proteinExistence type="inferred from homology"/>
<organism>
    <name type="scientific">Escherichia coli (strain K12 / DH10B)</name>
    <dbReference type="NCBI Taxonomy" id="316385"/>
    <lineage>
        <taxon>Bacteria</taxon>
        <taxon>Pseudomonadati</taxon>
        <taxon>Pseudomonadota</taxon>
        <taxon>Gammaproteobacteria</taxon>
        <taxon>Enterobacterales</taxon>
        <taxon>Enterobacteriaceae</taxon>
        <taxon>Escherichia</taxon>
    </lineage>
</organism>
<accession>B1X8M8</accession>
<evidence type="ECO:0000255" key="1">
    <source>
        <dbReference type="HAMAP-Rule" id="MF_01800"/>
    </source>
</evidence>